<comment type="function">
    <text evidence="1">Part of the high-affinity ATP-driven potassium transport (or Kdp) system, which catalyzes the hydrolysis of ATP coupled with the electrogenic transport of potassium into the cytoplasm. This subunit binds the periplasmic potassium ions and delivers the ions to the membrane domain of KdpB through an intramembrane tunnel.</text>
</comment>
<comment type="subunit">
    <text evidence="1">The system is composed of three essential subunits: KdpA, KdpB and KdpC.</text>
</comment>
<comment type="subcellular location">
    <subcellularLocation>
        <location evidence="1">Cell inner membrane</location>
        <topology evidence="1">Multi-pass membrane protein</topology>
    </subcellularLocation>
</comment>
<comment type="similarity">
    <text evidence="1">Belongs to the KdpA family.</text>
</comment>
<reference key="1">
    <citation type="journal article" date="2001" name="Nature">
        <title>Genome sequence of Yersinia pestis, the causative agent of plague.</title>
        <authorList>
            <person name="Parkhill J."/>
            <person name="Wren B.W."/>
            <person name="Thomson N.R."/>
            <person name="Titball R.W."/>
            <person name="Holden M.T.G."/>
            <person name="Prentice M.B."/>
            <person name="Sebaihia M."/>
            <person name="James K.D."/>
            <person name="Churcher C.M."/>
            <person name="Mungall K.L."/>
            <person name="Baker S."/>
            <person name="Basham D."/>
            <person name="Bentley S.D."/>
            <person name="Brooks K."/>
            <person name="Cerdeno-Tarraga A.-M."/>
            <person name="Chillingworth T."/>
            <person name="Cronin A."/>
            <person name="Davies R.M."/>
            <person name="Davis P."/>
            <person name="Dougan G."/>
            <person name="Feltwell T."/>
            <person name="Hamlin N."/>
            <person name="Holroyd S."/>
            <person name="Jagels K."/>
            <person name="Karlyshev A.V."/>
            <person name="Leather S."/>
            <person name="Moule S."/>
            <person name="Oyston P.C.F."/>
            <person name="Quail M.A."/>
            <person name="Rutherford K.M."/>
            <person name="Simmonds M."/>
            <person name="Skelton J."/>
            <person name="Stevens K."/>
            <person name="Whitehead S."/>
            <person name="Barrell B.G."/>
        </authorList>
    </citation>
    <scope>NUCLEOTIDE SEQUENCE [LARGE SCALE GENOMIC DNA]</scope>
    <source>
        <strain>CO-92 / Biovar Orientalis</strain>
    </source>
</reference>
<reference key="2">
    <citation type="journal article" date="2004" name="DNA Res.">
        <title>Complete genome sequence of Yersinia pestis strain 91001, an isolate avirulent to humans.</title>
        <authorList>
            <person name="Song Y."/>
            <person name="Tong Z."/>
            <person name="Wang J."/>
            <person name="Wang L."/>
            <person name="Guo Z."/>
            <person name="Han Y."/>
            <person name="Zhang J."/>
            <person name="Pei D."/>
            <person name="Zhou D."/>
            <person name="Qin H."/>
            <person name="Pang X."/>
            <person name="Han Y."/>
            <person name="Zhai J."/>
            <person name="Li M."/>
            <person name="Cui B."/>
            <person name="Qi Z."/>
            <person name="Jin L."/>
            <person name="Dai R."/>
            <person name="Chen F."/>
            <person name="Li S."/>
            <person name="Ye C."/>
            <person name="Du Z."/>
            <person name="Lin W."/>
            <person name="Wang J."/>
            <person name="Yu J."/>
            <person name="Yang H."/>
            <person name="Wang J."/>
            <person name="Huang P."/>
            <person name="Yang R."/>
        </authorList>
    </citation>
    <scope>NUCLEOTIDE SEQUENCE [LARGE SCALE GENOMIC DNA]</scope>
    <source>
        <strain>91001 / Biovar Mediaevalis</strain>
    </source>
</reference>
<protein>
    <recommendedName>
        <fullName evidence="1">Potassium-transporting ATPase potassium-binding subunit</fullName>
    </recommendedName>
    <alternativeName>
        <fullName evidence="1">ATP phosphohydrolase [potassium-transporting] A chain</fullName>
    </alternativeName>
    <alternativeName>
        <fullName evidence="1">Potassium-binding and translocating subunit A</fullName>
    </alternativeName>
    <alternativeName>
        <fullName evidence="1">Potassium-translocating ATPase A chain</fullName>
    </alternativeName>
</protein>
<accession>Q8ZD96</accession>
<accession>Q0WDJ8</accession>
<evidence type="ECO:0000255" key="1">
    <source>
        <dbReference type="HAMAP-Rule" id="MF_00275"/>
    </source>
</evidence>
<organism>
    <name type="scientific">Yersinia pestis</name>
    <dbReference type="NCBI Taxonomy" id="632"/>
    <lineage>
        <taxon>Bacteria</taxon>
        <taxon>Pseudomonadati</taxon>
        <taxon>Pseudomonadota</taxon>
        <taxon>Gammaproteobacteria</taxon>
        <taxon>Enterobacterales</taxon>
        <taxon>Yersiniaceae</taxon>
        <taxon>Yersinia</taxon>
    </lineage>
</organism>
<feature type="chain" id="PRO_0000166539" description="Potassium-transporting ATPase potassium-binding subunit">
    <location>
        <begin position="1"/>
        <end position="562"/>
    </location>
</feature>
<feature type="transmembrane region" description="Helical" evidence="1">
    <location>
        <begin position="6"/>
        <end position="26"/>
    </location>
</feature>
<feature type="transmembrane region" description="Helical" evidence="1">
    <location>
        <begin position="62"/>
        <end position="82"/>
    </location>
</feature>
<feature type="transmembrane region" description="Helical" evidence="1">
    <location>
        <begin position="132"/>
        <end position="152"/>
    </location>
</feature>
<feature type="transmembrane region" description="Helical" evidence="1">
    <location>
        <begin position="175"/>
        <end position="195"/>
    </location>
</feature>
<feature type="transmembrane region" description="Helical" evidence="1">
    <location>
        <begin position="253"/>
        <end position="273"/>
    </location>
</feature>
<feature type="transmembrane region" description="Helical" evidence="1">
    <location>
        <begin position="283"/>
        <end position="303"/>
    </location>
</feature>
<feature type="transmembrane region" description="Helical" evidence="1">
    <location>
        <begin position="327"/>
        <end position="347"/>
    </location>
</feature>
<feature type="transmembrane region" description="Helical" evidence="1">
    <location>
        <begin position="356"/>
        <end position="376"/>
    </location>
</feature>
<feature type="transmembrane region" description="Helical" evidence="1">
    <location>
        <begin position="379"/>
        <end position="399"/>
    </location>
</feature>
<feature type="transmembrane region" description="Helical" evidence="1">
    <location>
        <begin position="416"/>
        <end position="436"/>
    </location>
</feature>
<feature type="transmembrane region" description="Helical" evidence="1">
    <location>
        <begin position="483"/>
        <end position="503"/>
    </location>
</feature>
<feature type="transmembrane region" description="Helical" evidence="1">
    <location>
        <begin position="524"/>
        <end position="544"/>
    </location>
</feature>
<proteinExistence type="inferred from homology"/>
<dbReference type="EMBL" id="AL590842">
    <property type="protein sequence ID" value="CAL21311.1"/>
    <property type="molecule type" value="Genomic_DNA"/>
</dbReference>
<dbReference type="EMBL" id="AE017042">
    <property type="protein sequence ID" value="AAS62694.1"/>
    <property type="molecule type" value="Genomic_DNA"/>
</dbReference>
<dbReference type="PIR" id="AD0328">
    <property type="entry name" value="AD0328"/>
</dbReference>
<dbReference type="RefSeq" id="WP_002209652.1">
    <property type="nucleotide sequence ID" value="NZ_WUCM01000006.1"/>
</dbReference>
<dbReference type="RefSeq" id="YP_002347640.1">
    <property type="nucleotide sequence ID" value="NC_003143.1"/>
</dbReference>
<dbReference type="SMR" id="Q8ZD96"/>
<dbReference type="STRING" id="214092.YPO2692"/>
<dbReference type="PaxDb" id="214092-YPO2692"/>
<dbReference type="EnsemblBacteria" id="AAS62694">
    <property type="protein sequence ID" value="AAS62694"/>
    <property type="gene ID" value="YP_2495"/>
</dbReference>
<dbReference type="GeneID" id="57976001"/>
<dbReference type="KEGG" id="ype:YPO2692"/>
<dbReference type="KEGG" id="ypm:YP_2495"/>
<dbReference type="PATRIC" id="fig|214092.21.peg.3130"/>
<dbReference type="eggNOG" id="COG2060">
    <property type="taxonomic scope" value="Bacteria"/>
</dbReference>
<dbReference type="HOGENOM" id="CLU_018614_3_0_6"/>
<dbReference type="OMA" id="WQNYGGE"/>
<dbReference type="OrthoDB" id="9763796at2"/>
<dbReference type="Proteomes" id="UP000000815">
    <property type="component" value="Chromosome"/>
</dbReference>
<dbReference type="Proteomes" id="UP000001019">
    <property type="component" value="Chromosome"/>
</dbReference>
<dbReference type="GO" id="GO:0005886">
    <property type="term" value="C:plasma membrane"/>
    <property type="evidence" value="ECO:0000318"/>
    <property type="project" value="GO_Central"/>
</dbReference>
<dbReference type="GO" id="GO:0008556">
    <property type="term" value="F:P-type potassium transmembrane transporter activity"/>
    <property type="evidence" value="ECO:0000318"/>
    <property type="project" value="GO_Central"/>
</dbReference>
<dbReference type="GO" id="GO:0030955">
    <property type="term" value="F:potassium ion binding"/>
    <property type="evidence" value="ECO:0007669"/>
    <property type="project" value="UniProtKB-UniRule"/>
</dbReference>
<dbReference type="GO" id="GO:0071805">
    <property type="term" value="P:potassium ion transmembrane transport"/>
    <property type="evidence" value="ECO:0000318"/>
    <property type="project" value="GO_Central"/>
</dbReference>
<dbReference type="HAMAP" id="MF_00275">
    <property type="entry name" value="KdpA"/>
    <property type="match status" value="1"/>
</dbReference>
<dbReference type="InterPro" id="IPR004623">
    <property type="entry name" value="KdpA"/>
</dbReference>
<dbReference type="NCBIfam" id="TIGR00680">
    <property type="entry name" value="kdpA"/>
    <property type="match status" value="1"/>
</dbReference>
<dbReference type="PANTHER" id="PTHR30607">
    <property type="entry name" value="POTASSIUM-TRANSPORTING ATPASE A CHAIN"/>
    <property type="match status" value="1"/>
</dbReference>
<dbReference type="PANTHER" id="PTHR30607:SF2">
    <property type="entry name" value="POTASSIUM-TRANSPORTING ATPASE POTASSIUM-BINDING SUBUNIT"/>
    <property type="match status" value="1"/>
</dbReference>
<dbReference type="Pfam" id="PF03814">
    <property type="entry name" value="KdpA"/>
    <property type="match status" value="1"/>
</dbReference>
<dbReference type="PIRSF" id="PIRSF001294">
    <property type="entry name" value="K_ATPaseA"/>
    <property type="match status" value="1"/>
</dbReference>
<keyword id="KW-0997">Cell inner membrane</keyword>
<keyword id="KW-1003">Cell membrane</keyword>
<keyword id="KW-0406">Ion transport</keyword>
<keyword id="KW-0472">Membrane</keyword>
<keyword id="KW-0630">Potassium</keyword>
<keyword id="KW-0633">Potassium transport</keyword>
<keyword id="KW-1185">Reference proteome</keyword>
<keyword id="KW-0812">Transmembrane</keyword>
<keyword id="KW-1133">Transmembrane helix</keyword>
<keyword id="KW-0813">Transport</keyword>
<name>KDPA_YERPE</name>
<sequence>MVASGFLLIASFMLVLFVLSRPLGGFLARLIEGEPFSALQKVEAGLWRCSGVKNAEMNGWQYALAILCFNLLGIVLLFVLLMTQGSLPLNPEHLPGMSWHLALNTAVSFVTNTNWQAYSGENTLSYLSQMAGLTVQNFLSAATGIAVAFALIRAFARHSATTLGNAWVDLVRITLYVLLPIALIIALIFVSQGVLQNLDDYLHITTLEGVQQTLPMGPVASQEAIKVLGTNGGGFFGANSAHPFENPTAFSNFVQMLAIFLIPCALCFAFGQVVGDNRQGHALIWAMSLIFIVAVVVVMYAELAGNPHLSPLGADSNSNMEGKESRFGILATSLYAVVTTAASCGAVNAMHDSFTALGGMIPLWLMQIGEVVFGGVGSGLYGMLLFVLLTVFIAGLMIGRTPEYLGKKIDVFDMKMTALAILVTPTIVLLGTALALCTEAGRAGILNPGAHGFSEVLYALSSAANNNGSAFAGLSVNTPFYNLLLAAAMFIGRFGVILPVLAIASSLVAKKRQPAGNGTLPTGGLLFIGLLIGTVLLVGALTFIPALALGPVAEHLQVWLAH</sequence>
<gene>
    <name evidence="1" type="primary">kdpA</name>
    <name type="ordered locus">YPO2692</name>
    <name type="ordered locus">YP_2495</name>
</gene>